<evidence type="ECO:0000250" key="1">
    <source>
        <dbReference type="UniProtKB" id="L0E2Z4"/>
    </source>
</evidence>
<evidence type="ECO:0000250" key="2">
    <source>
        <dbReference type="UniProtKB" id="O93868"/>
    </source>
</evidence>
<evidence type="ECO:0000269" key="3">
    <source>
    </source>
</evidence>
<evidence type="ECO:0000269" key="4">
    <source>
    </source>
</evidence>
<evidence type="ECO:0000269" key="5">
    <source>
    </source>
</evidence>
<evidence type="ECO:0000303" key="6">
    <source>
    </source>
</evidence>
<evidence type="ECO:0000305" key="7"/>
<evidence type="ECO:0000305" key="8">
    <source>
    </source>
</evidence>
<keyword id="KW-0521">NADP</keyword>
<keyword id="KW-0560">Oxidoreductase</keyword>
<name>SOL3_ALTSO</name>
<sequence>MGGMLGFFVRQLTFMPKPLPQNVRLDGKTAIVTGANVGLGLEASKEMASHGLARVILGVRTVSKGEAAKQEILKQSPNCDVQVWPVDHESFESMVAFGERAQSLDRLDIVILCAGVKNLVFSLSKTGHEQNVQVNHLGTSLLSLLLLKPLKDTAAKTGSPSRLTIVASEVHFWTPFDERKAPSILARLDEKDSFRGMERYNTSKLLNILWMRELSSRVTGNVVINAVNPGLCASALHRTDPTPGLAYLNKIFAWTPAQGGHNLTYAATQHVDEPGAYLSEQHLEK</sequence>
<gene>
    <name type="primary">sol3</name>
</gene>
<proteinExistence type="inferred from homology"/>
<organism>
    <name type="scientific">Alternaria solani</name>
    <dbReference type="NCBI Taxonomy" id="48100"/>
    <lineage>
        <taxon>Eukaryota</taxon>
        <taxon>Fungi</taxon>
        <taxon>Dikarya</taxon>
        <taxon>Ascomycota</taxon>
        <taxon>Pezizomycotina</taxon>
        <taxon>Dothideomycetes</taxon>
        <taxon>Pleosporomycetidae</taxon>
        <taxon>Pleosporales</taxon>
        <taxon>Pleosporineae</taxon>
        <taxon>Pleosporaceae</taxon>
        <taxon>Alternaria</taxon>
        <taxon>Alternaria sect. Porri</taxon>
    </lineage>
</organism>
<comment type="function">
    <text evidence="3 4 5">Short chain dehydrogenase; part of the gene cluster that mediates the biosynthesis of the phytotoxin solanapyrone, a causal agent of early blight disease of potato and tomato (PubMed:20486243). The prosolanapyrone synthase sol1 is a polyketide synthase that produces the octaketide desmethylprosolanapyrone I via sequential condensations of 7 malonyl-CoA units with one acetyl-CoA unit, and one methylation step (PubMed:20486243). The octaketide backbone is further methylated by the sol2 O-methyltransferase to yield prosolanapyrone I (PubMed:20486243). Prosolanapyrone I is hydroxylated to prosolanapyrone II by the cytochrome P450 monooxygenase sol6 (PubMed:20486243). The solanapyrone synthase sol5 then catalyzes the oxidation of prosolanapyrone II and the subsequent Diels Alder cycloisomerization of the product prosolanapyrone III to solanapyrones A and D (PubMed:18256508, PubMed:9659400). Solanapyrones A and D are then converted into solanapyrones B and E, respectively, by the sol3 dehydrogenase (PubMed:20486243).</text>
</comment>
<comment type="pathway">
    <text evidence="8">Phytotoxin biosynthesis.</text>
</comment>
<comment type="similarity">
    <text evidence="7">Belongs to the short-chain dehydrogenases/reductases (SDR) family.</text>
</comment>
<accession>D7UQ42</accession>
<reference key="1">
    <citation type="journal article" date="2010" name="ChemBioChem">
        <title>Solanapyrone synthase, a possible Diels-Alderase and iterative type I polyketide synthase encoded in a biosynthetic gene cluster from Alternaria solani.</title>
        <authorList>
            <person name="Kasahara K."/>
            <person name="Miyamoto T."/>
            <person name="Fujimoto T."/>
            <person name="Oguri H."/>
            <person name="Tokiwano T."/>
            <person name="Oikawa H."/>
            <person name="Ebizuka Y."/>
            <person name="Fujii I."/>
        </authorList>
    </citation>
    <scope>NUCLEOTIDE SEQUENCE [GENOMIC DNA]</scope>
    <scope>FUNCTION</scope>
</reference>
<reference key="2">
    <citation type="journal article" date="1998" name="Biochim. Biophys. Acta">
        <title>Enzymatic activity and partial purification of solanapyrone synthase: first enzyme catalyzing Diels-Alder reaction.</title>
        <authorList>
            <person name="Katayama K."/>
            <person name="Kobayashi T."/>
            <person name="Oikawa H."/>
            <person name="Honma M."/>
            <person name="Ichihara A."/>
        </authorList>
    </citation>
    <scope>FUNCTION</scope>
</reference>
<reference key="3">
    <citation type="journal article" date="2008" name="Biosci. Biotechnol. Biochem.">
        <title>Purification and N-terminal amino acid sequence of solanapyrone synthase, a natural Diels-Alderase from Alternaria solani.</title>
        <authorList>
            <person name="Katayama K."/>
            <person name="Kobayashi T."/>
            <person name="Chijimatsu M."/>
            <person name="Ichihara A."/>
            <person name="Oikawa H."/>
        </authorList>
    </citation>
    <scope>FUNCTION</scope>
</reference>
<protein>
    <recommendedName>
        <fullName evidence="6">Short chain dehydrogenase sol3</fullName>
        <ecNumber evidence="8">1.1.1.-</ecNumber>
    </recommendedName>
    <alternativeName>
        <fullName evidence="6">Solanapyrone biosynthesis protein 3</fullName>
    </alternativeName>
</protein>
<feature type="chain" id="PRO_0000438553" description="Short chain dehydrogenase sol3">
    <location>
        <begin position="1"/>
        <end position="285"/>
    </location>
</feature>
<feature type="active site" description="Proton donor" evidence="2">
    <location>
        <position position="168"/>
    </location>
</feature>
<feature type="active site" description="Proton donor" evidence="2">
    <location>
        <position position="200"/>
    </location>
</feature>
<feature type="active site" description="Lowers pKa of active site Tyr" evidence="2">
    <location>
        <position position="204"/>
    </location>
</feature>
<feature type="binding site" evidence="1">
    <location>
        <position position="39"/>
    </location>
    <ligand>
        <name>NADP(+)</name>
        <dbReference type="ChEBI" id="CHEBI:58349"/>
    </ligand>
</feature>
<feature type="binding site" evidence="1">
    <location>
        <position position="64"/>
    </location>
    <ligand>
        <name>NADP(+)</name>
        <dbReference type="ChEBI" id="CHEBI:58349"/>
    </ligand>
</feature>
<feature type="binding site" evidence="1">
    <location>
        <position position="87"/>
    </location>
    <ligand>
        <name>NADP(+)</name>
        <dbReference type="ChEBI" id="CHEBI:58349"/>
    </ligand>
</feature>
<feature type="binding site" evidence="2">
    <location>
        <position position="200"/>
    </location>
    <ligand>
        <name>NADP(+)</name>
        <dbReference type="ChEBI" id="CHEBI:58349"/>
    </ligand>
</feature>
<feature type="binding site" evidence="2">
    <location>
        <position position="204"/>
    </location>
    <ligand>
        <name>NADP(+)</name>
        <dbReference type="ChEBI" id="CHEBI:58349"/>
    </ligand>
</feature>
<feature type="binding site" evidence="1">
    <location>
        <position position="234"/>
    </location>
    <ligand>
        <name>NADP(+)</name>
        <dbReference type="ChEBI" id="CHEBI:58349"/>
    </ligand>
</feature>
<dbReference type="EC" id="1.1.1.-" evidence="8"/>
<dbReference type="EMBL" id="AB514562">
    <property type="protein sequence ID" value="BAJ09787.1"/>
    <property type="molecule type" value="Genomic_DNA"/>
</dbReference>
<dbReference type="SMR" id="D7UQ42"/>
<dbReference type="GO" id="GO:0016491">
    <property type="term" value="F:oxidoreductase activity"/>
    <property type="evidence" value="ECO:0007669"/>
    <property type="project" value="UniProtKB-KW"/>
</dbReference>
<dbReference type="Gene3D" id="3.40.50.720">
    <property type="entry name" value="NAD(P)-binding Rossmann-like Domain"/>
    <property type="match status" value="1"/>
</dbReference>
<dbReference type="InterPro" id="IPR036291">
    <property type="entry name" value="NAD(P)-bd_dom_sf"/>
</dbReference>
<dbReference type="InterPro" id="IPR002347">
    <property type="entry name" value="SDR_fam"/>
</dbReference>
<dbReference type="PANTHER" id="PTHR24320:SF252">
    <property type="entry name" value="DEHYDROGENASE_REDUCTASE FAMILY PROTEIN, PUTATIVE (AFU_ORTHOLOGUE AFUA_3G08550)-RELATED"/>
    <property type="match status" value="1"/>
</dbReference>
<dbReference type="PANTHER" id="PTHR24320">
    <property type="entry name" value="RETINOL DEHYDROGENASE"/>
    <property type="match status" value="1"/>
</dbReference>
<dbReference type="Pfam" id="PF00106">
    <property type="entry name" value="adh_short"/>
    <property type="match status" value="1"/>
</dbReference>
<dbReference type="PRINTS" id="PR00081">
    <property type="entry name" value="GDHRDH"/>
</dbReference>
<dbReference type="SUPFAM" id="SSF51735">
    <property type="entry name" value="NAD(P)-binding Rossmann-fold domains"/>
    <property type="match status" value="1"/>
</dbReference>